<protein>
    <recommendedName>
        <fullName>Cyclopropane mycolic acid synthase MmaA2</fullName>
        <shortName>CMAS</shortName>
        <ecNumber evidence="2 5">2.1.1.79</ecNumber>
    </recommendedName>
    <alternativeName>
        <fullName>Cyclopropane-fatty-acyl-phospholipid synthase</fullName>
        <shortName>CFA synthase</shortName>
    </alternativeName>
    <alternativeName>
        <fullName>Mycolic acid methyltransferase</fullName>
        <shortName>MA-MT</shortName>
    </alternativeName>
    <alternativeName>
        <fullName>S-adenosylmethionine-dependent methyltransferase</fullName>
        <shortName>AdoMet-MT</shortName>
        <shortName>SAM-MT</shortName>
    </alternativeName>
</protein>
<sequence length="287" mass="32724">MVNDLTPHFEDVQAHYDLSDDFFRLFLDPTQTYSCAHFEREDMTLEEAQIAKIDLALGKLGLQPGMTLLDIGCGWGATMRRAIAQYDVNVVGLTLSKNQAAHVQKSFDEMDTPRDRRVLLAGWEQFNEPVDRIVSIGAFEHFGHDRHADFFARAHKILPPDGVLLLHTITGLTRQQMVDHGLPLTLWLARFLKFIATEIFPGGQPPTIEMVEEQSAKTGFTLTRRQSLQPHYARTLDLWAEALQEHKSEAIAIQSEEVYERYMKYLTGCAKLFRVGYIDVNQFTLAK</sequence>
<feature type="initiator methionine" description="Removed" evidence="11">
    <location>
        <position position="1"/>
    </location>
</feature>
<feature type="chain" id="PRO_0000398359" description="Cyclopropane mycolic acid synthase MmaA2">
    <location>
        <begin position="2"/>
        <end position="287"/>
    </location>
</feature>
<feature type="active site" evidence="1">
    <location>
        <position position="269"/>
    </location>
</feature>
<feature type="binding site" evidence="6">
    <location>
        <begin position="33"/>
        <end position="34"/>
    </location>
    <ligand>
        <name>S-adenosyl-L-methionine</name>
        <dbReference type="ChEBI" id="CHEBI:59789"/>
    </ligand>
</feature>
<feature type="binding site" evidence="6">
    <location>
        <begin position="72"/>
        <end position="74"/>
    </location>
    <ligand>
        <name>S-adenosyl-L-methionine</name>
        <dbReference type="ChEBI" id="CHEBI:59789"/>
    </ligand>
</feature>
<feature type="binding site" evidence="6">
    <location>
        <begin position="94"/>
        <end position="99"/>
    </location>
    <ligand>
        <name>S-adenosyl-L-methionine</name>
        <dbReference type="ChEBI" id="CHEBI:59789"/>
    </ligand>
</feature>
<feature type="binding site" evidence="6">
    <location>
        <begin position="123"/>
        <end position="124"/>
    </location>
    <ligand>
        <name>S-adenosyl-L-methionine</name>
        <dbReference type="ChEBI" id="CHEBI:59789"/>
    </ligand>
</feature>
<feature type="binding site" evidence="6">
    <location>
        <position position="136"/>
    </location>
    <ligand>
        <name>S-adenosyl-L-methionine</name>
        <dbReference type="ChEBI" id="CHEBI:59789"/>
    </ligand>
</feature>
<feature type="modified residue" description="N-acetylvaline" evidence="11">
    <location>
        <position position="2"/>
    </location>
</feature>
<feature type="helix" evidence="12">
    <location>
        <begin position="9"/>
        <end position="16"/>
    </location>
</feature>
<feature type="helix" evidence="12">
    <location>
        <begin position="20"/>
        <end position="24"/>
    </location>
</feature>
<feature type="helix" evidence="12">
    <location>
        <begin position="45"/>
        <end position="57"/>
    </location>
</feature>
<feature type="turn" evidence="12">
    <location>
        <begin position="58"/>
        <end position="61"/>
    </location>
</feature>
<feature type="strand" evidence="12">
    <location>
        <begin position="67"/>
        <end position="72"/>
    </location>
</feature>
<feature type="helix" evidence="12">
    <location>
        <begin position="77"/>
        <end position="86"/>
    </location>
</feature>
<feature type="strand" evidence="12">
    <location>
        <begin position="89"/>
        <end position="95"/>
    </location>
</feature>
<feature type="helix" evidence="12">
    <location>
        <begin position="97"/>
        <end position="108"/>
    </location>
</feature>
<feature type="strand" evidence="12">
    <location>
        <begin position="116"/>
        <end position="121"/>
    </location>
</feature>
<feature type="helix" evidence="12">
    <location>
        <begin position="123"/>
        <end position="125"/>
    </location>
</feature>
<feature type="strand" evidence="12">
    <location>
        <begin position="131"/>
        <end position="137"/>
    </location>
</feature>
<feature type="helix" evidence="12">
    <location>
        <begin position="139"/>
        <end position="142"/>
    </location>
</feature>
<feature type="helix" evidence="12">
    <location>
        <begin position="144"/>
        <end position="146"/>
    </location>
</feature>
<feature type="helix" evidence="12">
    <location>
        <begin position="147"/>
        <end position="157"/>
    </location>
</feature>
<feature type="strand" evidence="12">
    <location>
        <begin position="163"/>
        <end position="171"/>
    </location>
</feature>
<feature type="helix" evidence="12">
    <location>
        <begin position="174"/>
        <end position="179"/>
    </location>
</feature>
<feature type="helix" evidence="12">
    <location>
        <begin position="186"/>
        <end position="198"/>
    </location>
</feature>
<feature type="helix" evidence="12">
    <location>
        <begin position="208"/>
        <end position="218"/>
    </location>
</feature>
<feature type="strand" evidence="12">
    <location>
        <begin position="221"/>
        <end position="227"/>
    </location>
</feature>
<feature type="helix" evidence="12">
    <location>
        <begin position="229"/>
        <end position="245"/>
    </location>
</feature>
<feature type="helix" evidence="12">
    <location>
        <begin position="247"/>
        <end position="253"/>
    </location>
</feature>
<feature type="helix" evidence="12">
    <location>
        <begin position="256"/>
        <end position="275"/>
    </location>
</feature>
<feature type="strand" evidence="12">
    <location>
        <begin position="277"/>
        <end position="286"/>
    </location>
</feature>
<accession>Q79FX6</accession>
<accession>L0T7B6</accession>
<evidence type="ECO:0000250" key="1"/>
<evidence type="ECO:0000269" key="2">
    <source>
    </source>
</evidence>
<evidence type="ECO:0000269" key="3">
    <source>
    </source>
</evidence>
<evidence type="ECO:0000269" key="4">
    <source>
    </source>
</evidence>
<evidence type="ECO:0000269" key="5">
    <source>
    </source>
</evidence>
<evidence type="ECO:0000269" key="6">
    <source ref="8"/>
</evidence>
<evidence type="ECO:0000305" key="7"/>
<evidence type="ECO:0000305" key="8">
    <source>
    </source>
</evidence>
<evidence type="ECO:0000305" key="9">
    <source>
    </source>
</evidence>
<evidence type="ECO:0007744" key="10">
    <source>
        <dbReference type="PDB" id="1TPY"/>
    </source>
</evidence>
<evidence type="ECO:0007744" key="11">
    <source>
    </source>
</evidence>
<evidence type="ECO:0007829" key="12">
    <source>
        <dbReference type="PDB" id="1TPY"/>
    </source>
</evidence>
<reference key="1">
    <citation type="journal article" date="1998" name="Nature">
        <title>Deciphering the biology of Mycobacterium tuberculosis from the complete genome sequence.</title>
        <authorList>
            <person name="Cole S.T."/>
            <person name="Brosch R."/>
            <person name="Parkhill J."/>
            <person name="Garnier T."/>
            <person name="Churcher C.M."/>
            <person name="Harris D.E."/>
            <person name="Gordon S.V."/>
            <person name="Eiglmeier K."/>
            <person name="Gas S."/>
            <person name="Barry C.E. III"/>
            <person name="Tekaia F."/>
            <person name="Badcock K."/>
            <person name="Basham D."/>
            <person name="Brown D."/>
            <person name="Chillingworth T."/>
            <person name="Connor R."/>
            <person name="Davies R.M."/>
            <person name="Devlin K."/>
            <person name="Feltwell T."/>
            <person name="Gentles S."/>
            <person name="Hamlin N."/>
            <person name="Holroyd S."/>
            <person name="Hornsby T."/>
            <person name="Jagels K."/>
            <person name="Krogh A."/>
            <person name="McLean J."/>
            <person name="Moule S."/>
            <person name="Murphy L.D."/>
            <person name="Oliver S."/>
            <person name="Osborne J."/>
            <person name="Quail M.A."/>
            <person name="Rajandream M.A."/>
            <person name="Rogers J."/>
            <person name="Rutter S."/>
            <person name="Seeger K."/>
            <person name="Skelton S."/>
            <person name="Squares S."/>
            <person name="Squares R."/>
            <person name="Sulston J.E."/>
            <person name="Taylor K."/>
            <person name="Whitehead S."/>
            <person name="Barrell B.G."/>
        </authorList>
    </citation>
    <scope>NUCLEOTIDE SEQUENCE [LARGE SCALE GENOMIC DNA]</scope>
    <source>
        <strain>ATCC 25618 / H37Rv</strain>
    </source>
</reference>
<reference key="2">
    <citation type="journal article" date="2003" name="J. Biol. Chem.">
        <title>The mmaA2 gene of Mycobacterium tuberculosis encodes the distal cyclopropane synthase of the alpha-mycolic acid.</title>
        <authorList>
            <person name="Glickman M.S."/>
        </authorList>
    </citation>
    <scope>FUNCTION IN THE BIOSYNTHESIS OF CYCLOPROPANE RING IN THE ALPHA MYCOLATE</scope>
    <scope>CATALYTIC ACTIVITY</scope>
    <scope>PATHWAY</scope>
    <scope>DISRUPTION PHENOTYPE</scope>
    <source>
        <strain>ATCC 35801 / TMC 107 / Erdman</strain>
    </source>
</reference>
<reference key="3">
    <citation type="journal article" date="2007" name="PLoS ONE">
        <title>Thiacetazone, an antitubercular drug that inhibits cyclopropanation of cell wall mycolic acids in mycobacteria.</title>
        <authorList>
            <person name="Alahari A."/>
            <person name="Trivelli X."/>
            <person name="Guerardel Y."/>
            <person name="Dover L.G."/>
            <person name="Besra G.S."/>
            <person name="Sacchettini J.C."/>
            <person name="Reynolds R.C."/>
            <person name="Coxon G.D."/>
            <person name="Kremer L."/>
        </authorList>
    </citation>
    <scope>ACTIVITY REGULATION</scope>
    <source>
        <strain>ATCC 25618 / H37Rv</strain>
    </source>
</reference>
<reference key="4">
    <citation type="journal article" date="2008" name="BMC Syst. Biol.">
        <title>targetTB: a target identification pipeline for Mycobacterium tuberculosis through an interactome, reactome and genome-scale structural analysis.</title>
        <authorList>
            <person name="Raman K."/>
            <person name="Yeturu K."/>
            <person name="Chandra N."/>
        </authorList>
    </citation>
    <scope>IDENTIFICATION AS A DRUG TARGET [LARGE SCALE ANALYSIS]</scope>
</reference>
<reference key="5">
    <citation type="journal article" date="2009" name="J. Biol. Chem.">
        <title>S-adenosyl-N-decyl-aminoethyl, a potent bisubstrate inhibitor of mycobacterium tuberculosis mycolic acid methyltransferases.</title>
        <authorList>
            <person name="Vaubourgeix J."/>
            <person name="Bardou F."/>
            <person name="Boissier F."/>
            <person name="Julien S."/>
            <person name="Constant P."/>
            <person name="Ploux O."/>
            <person name="Daffe M."/>
            <person name="Quemard A."/>
            <person name="Mourey L."/>
        </authorList>
    </citation>
    <scope>ACTIVITY REGULATION</scope>
    <source>
        <strain>ATCC 25618 / H37Rv</strain>
    </source>
</reference>
<reference key="6">
    <citation type="journal article" date="2010" name="J. Bacteriol.">
        <title>Redundant function of cmaA2 and mmaA2 in Mycobacterium tuberculosis cis cyclopropanation of oxygenated mycolates.</title>
        <authorList>
            <person name="Barkan D."/>
            <person name="Rao V."/>
            <person name="Sukenick G.D."/>
            <person name="Glickman M.S."/>
        </authorList>
    </citation>
    <scope>FUNCTION IN OXYGEN-CONTAINING MYCOLATES AND IN ALPHA-MYCOLATES BIOSYNTHESIS</scope>
    <scope>CATALYTIC ACTIVITY</scope>
    <scope>PATHWAY</scope>
    <scope>DISRUPTION PHENOTYPE</scope>
</reference>
<reference key="7">
    <citation type="journal article" date="2011" name="Mol. Cell. Proteomics">
        <title>Proteogenomic analysis of Mycobacterium tuberculosis by high resolution mass spectrometry.</title>
        <authorList>
            <person name="Kelkar D.S."/>
            <person name="Kumar D."/>
            <person name="Kumar P."/>
            <person name="Balakrishnan L."/>
            <person name="Muthusamy B."/>
            <person name="Yadav A.K."/>
            <person name="Shrivastava P."/>
            <person name="Marimuthu A."/>
            <person name="Anand S."/>
            <person name="Sundaram H."/>
            <person name="Kingsbury R."/>
            <person name="Harsha H.C."/>
            <person name="Nair B."/>
            <person name="Prasad T.S."/>
            <person name="Chauhan D.S."/>
            <person name="Katoch K."/>
            <person name="Katoch V.M."/>
            <person name="Kumar P."/>
            <person name="Chaerkady R."/>
            <person name="Ramachandran S."/>
            <person name="Dash D."/>
            <person name="Pandey A."/>
        </authorList>
    </citation>
    <scope>ACETYLATION [LARGE SCALE ANALYSIS] AT VAL-2</scope>
    <scope>CLEAVAGE OF INITIATOR METHIONINE [LARGE SCALE ANALYSIS]</scope>
    <scope>IDENTIFICATION BY MASS SPECTROMETRY [LARGE SCALE ANALYSIS]</scope>
    <source>
        <strain>ATCC 25618 / H37Rv</strain>
    </source>
</reference>
<reference evidence="10" key="8">
    <citation type="submission" date="2004-06" db="EMBL/GenBank/DDBJ databases">
        <title>Structure of the cyclopropane synthase mmaA2 from Mycobacterium tuberculosis.</title>
        <authorList>
            <person name="Smith C.V."/>
            <person name="Sacchettini J.C."/>
        </authorList>
    </citation>
    <scope>X-RAY CRYSTALLOGRAPHY (2.20 ANGSTROMS) IN COMPLEX WITH S-ADENOSYL-L-HOMOCYSTEINE</scope>
    <source>
        <strain>ATCC 25618 / H37Rv</strain>
    </source>
</reference>
<gene>
    <name type="primary">mmaA2</name>
    <name type="synonym">mma2</name>
    <name type="ordered locus">Rv0644c</name>
</gene>
<proteinExistence type="evidence at protein level"/>
<name>MMAA2_MYCTU</name>
<keyword id="KW-0002">3D-structure</keyword>
<keyword id="KW-0007">Acetylation</keyword>
<keyword id="KW-0444">Lipid biosynthesis</keyword>
<keyword id="KW-0443">Lipid metabolism</keyword>
<keyword id="KW-0489">Methyltransferase</keyword>
<keyword id="KW-1185">Reference proteome</keyword>
<keyword id="KW-0949">S-adenosyl-L-methionine</keyword>
<keyword id="KW-0808">Transferase</keyword>
<dbReference type="EC" id="2.1.1.79" evidence="2 5"/>
<dbReference type="EMBL" id="AL123456">
    <property type="protein sequence ID" value="CCP43387.1"/>
    <property type="molecule type" value="Genomic_DNA"/>
</dbReference>
<dbReference type="RefSeq" id="NP_215158.1">
    <property type="nucleotide sequence ID" value="NC_000962.3"/>
</dbReference>
<dbReference type="RefSeq" id="WP_003900985.1">
    <property type="nucleotide sequence ID" value="NZ_NVQJ01000007.1"/>
</dbReference>
<dbReference type="PDB" id="1TPY">
    <property type="method" value="X-ray"/>
    <property type="resolution" value="2.20 A"/>
    <property type="chains" value="A=1-287"/>
</dbReference>
<dbReference type="PDBsum" id="1TPY"/>
<dbReference type="SMR" id="Q79FX6"/>
<dbReference type="FunCoup" id="Q79FX6">
    <property type="interactions" value="7"/>
</dbReference>
<dbReference type="STRING" id="83332.Rv0644c"/>
<dbReference type="DrugBank" id="DB01718">
    <property type="generic name" value="Cetrimonium"/>
</dbReference>
<dbReference type="DrugBank" id="DB01752">
    <property type="generic name" value="S-adenosyl-L-homocysteine"/>
</dbReference>
<dbReference type="iPTMnet" id="Q79FX6"/>
<dbReference type="PaxDb" id="83332-Rv0644c"/>
<dbReference type="DNASU" id="888061"/>
<dbReference type="GeneID" id="45424604"/>
<dbReference type="GeneID" id="888061"/>
<dbReference type="KEGG" id="mtu:Rv0644c"/>
<dbReference type="KEGG" id="mtv:RVBD_0644c"/>
<dbReference type="TubercuList" id="Rv0644c"/>
<dbReference type="eggNOG" id="COG2230">
    <property type="taxonomic scope" value="Bacteria"/>
</dbReference>
<dbReference type="InParanoid" id="Q79FX6"/>
<dbReference type="OrthoDB" id="9782855at2"/>
<dbReference type="PhylomeDB" id="Q79FX6"/>
<dbReference type="BioCyc" id="MetaCyc:G185E-4787-MONOMER"/>
<dbReference type="UniPathway" id="UPA00915"/>
<dbReference type="EvolutionaryTrace" id="Q79FX6"/>
<dbReference type="Proteomes" id="UP000001584">
    <property type="component" value="Chromosome"/>
</dbReference>
<dbReference type="GO" id="GO:0009274">
    <property type="term" value="C:peptidoglycan-based cell wall"/>
    <property type="evidence" value="ECO:0007005"/>
    <property type="project" value="MTBBASE"/>
</dbReference>
<dbReference type="GO" id="GO:0005886">
    <property type="term" value="C:plasma membrane"/>
    <property type="evidence" value="ECO:0007005"/>
    <property type="project" value="MTBBASE"/>
</dbReference>
<dbReference type="GO" id="GO:0008825">
    <property type="term" value="F:cyclopropane-fatty-acyl-phospholipid synthase activity"/>
    <property type="evidence" value="ECO:0000315"/>
    <property type="project" value="UniProtKB"/>
</dbReference>
<dbReference type="GO" id="GO:0008168">
    <property type="term" value="F:methyltransferase activity"/>
    <property type="evidence" value="ECO:0000315"/>
    <property type="project" value="UniProtKB"/>
</dbReference>
<dbReference type="GO" id="GO:0008610">
    <property type="term" value="P:lipid biosynthetic process"/>
    <property type="evidence" value="ECO:0000318"/>
    <property type="project" value="GO_Central"/>
</dbReference>
<dbReference type="GO" id="GO:0032259">
    <property type="term" value="P:methylation"/>
    <property type="evidence" value="ECO:0007669"/>
    <property type="project" value="UniProtKB-KW"/>
</dbReference>
<dbReference type="GO" id="GO:0071768">
    <property type="term" value="P:mycolic acid biosynthetic process"/>
    <property type="evidence" value="ECO:0000314"/>
    <property type="project" value="MTBBASE"/>
</dbReference>
<dbReference type="CDD" id="cd02440">
    <property type="entry name" value="AdoMet_MTases"/>
    <property type="match status" value="1"/>
</dbReference>
<dbReference type="FunFam" id="3.40.50.150:FF:000115">
    <property type="entry name" value="Cyclopropane mycolic acid synthase 1"/>
    <property type="match status" value="1"/>
</dbReference>
<dbReference type="Gene3D" id="3.40.50.150">
    <property type="entry name" value="Vaccinia Virus protein VP39"/>
    <property type="match status" value="1"/>
</dbReference>
<dbReference type="InterPro" id="IPR050723">
    <property type="entry name" value="CFA/CMAS"/>
</dbReference>
<dbReference type="InterPro" id="IPR003333">
    <property type="entry name" value="CMAS"/>
</dbReference>
<dbReference type="InterPro" id="IPR047672">
    <property type="entry name" value="CMAS_actinobact"/>
</dbReference>
<dbReference type="InterPro" id="IPR029063">
    <property type="entry name" value="SAM-dependent_MTases_sf"/>
</dbReference>
<dbReference type="NCBIfam" id="NF040660">
    <property type="entry name" value="mycolic_MTase"/>
    <property type="match status" value="1"/>
</dbReference>
<dbReference type="PANTHER" id="PTHR43667">
    <property type="entry name" value="CYCLOPROPANE-FATTY-ACYL-PHOSPHOLIPID SYNTHASE"/>
    <property type="match status" value="1"/>
</dbReference>
<dbReference type="PANTHER" id="PTHR43667:SF1">
    <property type="entry name" value="CYCLOPROPANE-FATTY-ACYL-PHOSPHOLIPID SYNTHASE"/>
    <property type="match status" value="1"/>
</dbReference>
<dbReference type="Pfam" id="PF02353">
    <property type="entry name" value="CMAS"/>
    <property type="match status" value="1"/>
</dbReference>
<dbReference type="PIRSF" id="PIRSF003085">
    <property type="entry name" value="CMAS"/>
    <property type="match status" value="1"/>
</dbReference>
<dbReference type="SUPFAM" id="SSF53335">
    <property type="entry name" value="S-adenosyl-L-methionine-dependent methyltransferases"/>
    <property type="match status" value="1"/>
</dbReference>
<comment type="function">
    <text evidence="2 5">Catalyzes the conversion of a double bond to a cis cyclopropane ring at the distal position of an alpha mycolic acid via the transfer of a methylene group from S-adenosyl-L-methionine. MmaA2 also catalyzes the biosynthesis of the cis-cyclopropanated methoxymycolates. Cyclopropanated mycolic acids are key factors participating in cell envelope permeability, host immunomodulation and persistence.</text>
</comment>
<comment type="catalytic activity">
    <reaction evidence="2 5">
        <text>a 1-acyl-2-(9Z)-enoyl-sn-glycero-3-phospholipid + S-adenosyl-L-methionine = a 1-acyl-2-(9-cyclopronane)-acyl-sn-glycero-3-phospholipid + S-adenosyl-L-homocysteine + H(+)</text>
        <dbReference type="Rhea" id="RHEA:11988"/>
        <dbReference type="ChEBI" id="CHEBI:15378"/>
        <dbReference type="ChEBI" id="CHEBI:57856"/>
        <dbReference type="ChEBI" id="CHEBI:59789"/>
        <dbReference type="ChEBI" id="CHEBI:76593"/>
        <dbReference type="ChEBI" id="CHEBI:76594"/>
        <dbReference type="EC" id="2.1.1.79"/>
    </reaction>
</comment>
<comment type="activity regulation">
    <text evidence="3 4">Inhibited by S-adenosyl-N-decyl-aminoethyl (SADAE) and thiacetazone (TAC).</text>
</comment>
<comment type="pathway">
    <text evidence="8 9">Lipid metabolism; mycolic acid biosynthesis.</text>
</comment>
<comment type="disruption phenotype">
    <text evidence="2 5">Disruption of this gene suppresses a cyclopropane group at the distal position of alpha mycolic acid. Mutant produces fully cyclopropanated methoxymycolates, but the efficiency of cis-methoxymycolate cyclopropanation is reduced, leading to accumulation of unsaturated methoxymycolate derivatives. Cis/trans ratios in purified ketomycolates are unchanged (PubMed:12502719). Cells lacking both cmaA2 and mmaA2 genes cannot cis cyclopropanate methoxymycolates or ketomycolates (PubMed:20472794).</text>
</comment>
<comment type="similarity">
    <text evidence="7">Belongs to the CFA/CMAS family.</text>
</comment>
<organism>
    <name type="scientific">Mycobacterium tuberculosis (strain ATCC 25618 / H37Rv)</name>
    <dbReference type="NCBI Taxonomy" id="83332"/>
    <lineage>
        <taxon>Bacteria</taxon>
        <taxon>Bacillati</taxon>
        <taxon>Actinomycetota</taxon>
        <taxon>Actinomycetes</taxon>
        <taxon>Mycobacteriales</taxon>
        <taxon>Mycobacteriaceae</taxon>
        <taxon>Mycobacterium</taxon>
        <taxon>Mycobacterium tuberculosis complex</taxon>
    </lineage>
</organism>